<feature type="signal peptide" evidence="2">
    <location>
        <begin position="1"/>
        <end position="26"/>
    </location>
</feature>
<feature type="chain" id="PRO_0000236005" description="Fusion glycoprotein F0">
    <location>
        <begin position="27"/>
        <end position="546"/>
    </location>
</feature>
<feature type="chain" id="PRO_0000236006" description="Fusion glycoprotein F2">
    <location>
        <begin position="27"/>
        <end position="109"/>
    </location>
</feature>
<feature type="chain" id="PRO_0000236007" description="Fusion glycoprotein F1">
    <location>
        <begin position="110"/>
        <end position="546"/>
    </location>
</feature>
<feature type="topological domain" description="Extracellular" evidence="2">
    <location>
        <begin position="27"/>
        <end position="497"/>
    </location>
</feature>
<feature type="transmembrane region" description="Helical" evidence="2">
    <location>
        <begin position="498"/>
        <end position="518"/>
    </location>
</feature>
<feature type="topological domain" description="Cytoplasmic" evidence="2">
    <location>
        <begin position="519"/>
        <end position="546"/>
    </location>
</feature>
<feature type="region of interest" description="Fusion peptide" evidence="1">
    <location>
        <begin position="110"/>
        <end position="134"/>
    </location>
</feature>
<feature type="coiled-coil region" evidence="2">
    <location>
        <begin position="135"/>
        <end position="163"/>
    </location>
</feature>
<feature type="coiled-coil region" evidence="2">
    <location>
        <begin position="459"/>
        <end position="484"/>
    </location>
</feature>
<feature type="site" description="Cleavage; by host" evidence="1">
    <location>
        <begin position="109"/>
        <end position="110"/>
    </location>
</feature>
<feature type="glycosylation site" description="N-linked (GlcNAc...) asparagine; by host" evidence="2">
    <location>
        <position position="64"/>
    </location>
</feature>
<feature type="glycosylation site" description="N-linked (GlcNAc...) asparagine; by host" evidence="2">
    <location>
        <position position="67"/>
    </location>
</feature>
<feature type="glycosylation site" description="N-linked (GlcNAc...) asparagine; by host" evidence="14">
    <location>
        <position position="99"/>
    </location>
</feature>
<feature type="glycosylation site" description="N-linked (GlcNAc...) asparagine; by host" evidence="14">
    <location>
        <position position="414"/>
    </location>
</feature>
<feature type="glycosylation site" description="N-linked (GlcNAc...) asparagine; by host" evidence="14">
    <location>
        <position position="464"/>
    </location>
</feature>
<feature type="disulfide bond" description="Interchain (between F2 and F1 chains)" evidence="7 8 9 10 12 14 15 16 17 18 19 20 21 22 23 24 25 26 27 28 29">
    <location>
        <begin position="71"/>
        <end position="192"/>
    </location>
</feature>
<feature type="disulfide bond" evidence="7 8 9 10 12 14 15 16 17 18 19 20 21 22 23 24 25 26 27 28 29">
    <location>
        <begin position="331"/>
        <end position="340"/>
    </location>
</feature>
<feature type="disulfide bond" evidence="7 8 9 10 12 14 15 16 17 18 19 20 21 22 23 24 25 26 27 28 29">
    <location>
        <begin position="355"/>
        <end position="363"/>
    </location>
</feature>
<feature type="disulfide bond" evidence="7 8 9 10 12 14 15 16 17 18 19 20 21 22 23 24 25 26 27 28 29">
    <location>
        <begin position="387"/>
        <end position="392"/>
    </location>
</feature>
<feature type="disulfide bond" evidence="7 8 9 10 12 14 15 16 17 18 19 20 21 22 23 24 25 26 27 28 29">
    <location>
        <begin position="394"/>
        <end position="417"/>
    </location>
</feature>
<feature type="sequence variant" description="In strain: Isolate NiV/MY/99/VRI-0626.">
    <original>T</original>
    <variation>I</variation>
    <location>
        <position position="250"/>
    </location>
</feature>
<feature type="sequence variant" description="In strain: Isolate Malaysian flying-fox.">
    <original>M</original>
    <variation>T</variation>
    <location>
        <position position="348"/>
    </location>
</feature>
<feature type="mutagenesis site" description="Significant decrease of virus particle budding." evidence="6">
    <original>Y</original>
    <variation>A</variation>
    <location>
        <position position="525"/>
    </location>
</feature>
<feature type="mutagenesis site" description="Significant decrease of virus particle budding." evidence="6">
    <original>L</original>
    <variation>A</variation>
    <location>
        <position position="528"/>
    </location>
</feature>
<feature type="helix" evidence="37">
    <location>
        <begin position="30"/>
        <end position="35"/>
    </location>
</feature>
<feature type="strand" evidence="37">
    <location>
        <begin position="38"/>
        <end position="60"/>
    </location>
</feature>
<feature type="helix" evidence="37">
    <location>
        <begin position="66"/>
        <end position="71"/>
    </location>
</feature>
<feature type="turn" evidence="33">
    <location>
        <begin position="72"/>
        <end position="74"/>
    </location>
</feature>
<feature type="helix" evidence="37">
    <location>
        <begin position="75"/>
        <end position="98"/>
    </location>
</feature>
<feature type="strand" evidence="37">
    <location>
        <begin position="101"/>
        <end position="103"/>
    </location>
</feature>
<feature type="strand" evidence="33">
    <location>
        <begin position="108"/>
        <end position="110"/>
    </location>
</feature>
<feature type="strand" evidence="37">
    <location>
        <begin position="113"/>
        <end position="116"/>
    </location>
</feature>
<feature type="helix" evidence="37">
    <location>
        <begin position="117"/>
        <end position="120"/>
    </location>
</feature>
<feature type="strand" evidence="37">
    <location>
        <begin position="122"/>
        <end position="124"/>
    </location>
</feature>
<feature type="helix" evidence="34">
    <location>
        <begin position="125"/>
        <end position="136"/>
    </location>
</feature>
<feature type="helix" evidence="30">
    <location>
        <begin position="140"/>
        <end position="174"/>
    </location>
</feature>
<feature type="helix" evidence="37">
    <location>
        <begin position="176"/>
        <end position="181"/>
    </location>
</feature>
<feature type="helix" evidence="37">
    <location>
        <begin position="184"/>
        <end position="186"/>
    </location>
</feature>
<feature type="helix" evidence="30">
    <location>
        <begin position="188"/>
        <end position="205"/>
    </location>
</feature>
<feature type="turn" evidence="36">
    <location>
        <begin position="211"/>
        <end position="213"/>
    </location>
</feature>
<feature type="strand" evidence="32">
    <location>
        <begin position="221"/>
        <end position="224"/>
    </location>
</feature>
<feature type="helix" evidence="37">
    <location>
        <begin position="228"/>
        <end position="231"/>
    </location>
</feature>
<feature type="helix" evidence="37">
    <location>
        <begin position="232"/>
        <end position="235"/>
    </location>
</feature>
<feature type="helix" evidence="37">
    <location>
        <begin position="239"/>
        <end position="246"/>
    </location>
</feature>
<feature type="strand" evidence="33">
    <location>
        <begin position="250"/>
        <end position="252"/>
    </location>
</feature>
<feature type="helix" evidence="37">
    <location>
        <begin position="253"/>
        <end position="258"/>
    </location>
</feature>
<feature type="strand" evidence="37">
    <location>
        <begin position="263"/>
        <end position="270"/>
    </location>
</feature>
<feature type="turn" evidence="37">
    <location>
        <begin position="271"/>
        <end position="274"/>
    </location>
</feature>
<feature type="strand" evidence="37">
    <location>
        <begin position="275"/>
        <end position="287"/>
    </location>
</feature>
<feature type="strand" evidence="37">
    <location>
        <begin position="291"/>
        <end position="298"/>
    </location>
</feature>
<feature type="strand" evidence="37">
    <location>
        <begin position="301"/>
        <end position="303"/>
    </location>
</feature>
<feature type="strand" evidence="37">
    <location>
        <begin position="306"/>
        <end position="310"/>
    </location>
</feature>
<feature type="strand" evidence="37">
    <location>
        <begin position="314"/>
        <end position="319"/>
    </location>
</feature>
<feature type="strand" evidence="37">
    <location>
        <begin position="322"/>
        <end position="326"/>
    </location>
</feature>
<feature type="helix" evidence="37">
    <location>
        <begin position="328"/>
        <end position="330"/>
    </location>
</feature>
<feature type="strand" evidence="37">
    <location>
        <begin position="331"/>
        <end position="333"/>
    </location>
</feature>
<feature type="strand" evidence="37">
    <location>
        <begin position="335"/>
        <end position="342"/>
    </location>
</feature>
<feature type="strand" evidence="35">
    <location>
        <begin position="345"/>
        <end position="347"/>
    </location>
</feature>
<feature type="helix" evidence="37">
    <location>
        <begin position="350"/>
        <end position="356"/>
    </location>
</feature>
<feature type="helix" evidence="37">
    <location>
        <begin position="360"/>
        <end position="362"/>
    </location>
</feature>
<feature type="strand" evidence="37">
    <location>
        <begin position="365"/>
        <end position="367"/>
    </location>
</feature>
<feature type="strand" evidence="37">
    <location>
        <begin position="376"/>
        <end position="379"/>
    </location>
</feature>
<feature type="strand" evidence="37">
    <location>
        <begin position="382"/>
        <end position="385"/>
    </location>
</feature>
<feature type="turn" evidence="37">
    <location>
        <begin position="387"/>
        <end position="389"/>
    </location>
</feature>
<feature type="strand" evidence="37">
    <location>
        <begin position="392"/>
        <end position="394"/>
    </location>
</feature>
<feature type="turn" evidence="37">
    <location>
        <begin position="395"/>
        <end position="397"/>
    </location>
</feature>
<feature type="strand" evidence="31">
    <location>
        <begin position="399"/>
        <end position="401"/>
    </location>
</feature>
<feature type="strand" evidence="37">
    <location>
        <begin position="410"/>
        <end position="412"/>
    </location>
</feature>
<feature type="turn" evidence="37">
    <location>
        <begin position="414"/>
        <end position="416"/>
    </location>
</feature>
<feature type="strand" evidence="37">
    <location>
        <begin position="418"/>
        <end position="422"/>
    </location>
</feature>
<feature type="strand" evidence="37">
    <location>
        <begin position="425"/>
        <end position="428"/>
    </location>
</feature>
<feature type="strand" evidence="35">
    <location>
        <begin position="432"/>
        <end position="437"/>
    </location>
</feature>
<feature type="helix" evidence="37">
    <location>
        <begin position="438"/>
        <end position="440"/>
    </location>
</feature>
<feature type="helix" evidence="37">
    <location>
        <begin position="453"/>
        <end position="475"/>
    </location>
</feature>
<evidence type="ECO:0000250" key="1"/>
<evidence type="ECO:0000255" key="2"/>
<evidence type="ECO:0000269" key="3">
    <source>
    </source>
</evidence>
<evidence type="ECO:0000269" key="4">
    <source>
    </source>
</evidence>
<evidence type="ECO:0000269" key="5">
    <source>
    </source>
</evidence>
<evidence type="ECO:0000269" key="6">
    <source>
    </source>
</evidence>
<evidence type="ECO:0000269" key="7">
    <source>
    </source>
</evidence>
<evidence type="ECO:0000269" key="8">
    <source>
    </source>
</evidence>
<evidence type="ECO:0000269" key="9">
    <source>
    </source>
</evidence>
<evidence type="ECO:0000269" key="10">
    <source>
    </source>
</evidence>
<evidence type="ECO:0000269" key="11">
    <source>
    </source>
</evidence>
<evidence type="ECO:0000269" key="12">
    <source>
    </source>
</evidence>
<evidence type="ECO:0000305" key="13"/>
<evidence type="ECO:0007744" key="14">
    <source>
        <dbReference type="PDB" id="5EVM"/>
    </source>
</evidence>
<evidence type="ECO:0007744" key="15">
    <source>
        <dbReference type="PDB" id="6T3F"/>
    </source>
</evidence>
<evidence type="ECO:0007744" key="16">
    <source>
        <dbReference type="PDB" id="6TYS"/>
    </source>
</evidence>
<evidence type="ECO:0007744" key="17">
    <source>
        <dbReference type="PDB" id="7KI4"/>
    </source>
</evidence>
<evidence type="ECO:0007744" key="18">
    <source>
        <dbReference type="PDB" id="7UOP"/>
    </source>
</evidence>
<evidence type="ECO:0007744" key="19">
    <source>
        <dbReference type="PDB" id="7UP9"/>
    </source>
</evidence>
<evidence type="ECO:0007744" key="20">
    <source>
        <dbReference type="PDB" id="7UPA"/>
    </source>
</evidence>
<evidence type="ECO:0007744" key="21">
    <source>
        <dbReference type="PDB" id="7UPB"/>
    </source>
</evidence>
<evidence type="ECO:0007744" key="22">
    <source>
        <dbReference type="PDB" id="7UPD"/>
    </source>
</evidence>
<evidence type="ECO:0007744" key="23">
    <source>
        <dbReference type="PDB" id="7UPK"/>
    </source>
</evidence>
<evidence type="ECO:0007744" key="24">
    <source>
        <dbReference type="PDB" id="8DMJ"/>
    </source>
</evidence>
<evidence type="ECO:0007744" key="25">
    <source>
        <dbReference type="PDB" id="8DNG"/>
    </source>
</evidence>
<evidence type="ECO:0007744" key="26">
    <source>
        <dbReference type="PDB" id="8DO4"/>
    </source>
</evidence>
<evidence type="ECO:0007744" key="27">
    <source>
        <dbReference type="PDB" id="8RVN"/>
    </source>
</evidence>
<evidence type="ECO:0007744" key="28">
    <source>
        <dbReference type="PDB" id="8XN9"/>
    </source>
</evidence>
<evidence type="ECO:0007744" key="29">
    <source>
        <dbReference type="PDB" id="8XNH"/>
    </source>
</evidence>
<evidence type="ECO:0007829" key="30">
    <source>
        <dbReference type="PDB" id="3N27"/>
    </source>
</evidence>
<evidence type="ECO:0007829" key="31">
    <source>
        <dbReference type="PDB" id="6T3F"/>
    </source>
</evidence>
<evidence type="ECO:0007829" key="32">
    <source>
        <dbReference type="PDB" id="7KI4"/>
    </source>
</evidence>
<evidence type="ECO:0007829" key="33">
    <source>
        <dbReference type="PDB" id="7UPB"/>
    </source>
</evidence>
<evidence type="ECO:0007829" key="34">
    <source>
        <dbReference type="PDB" id="7UPD"/>
    </source>
</evidence>
<evidence type="ECO:0007829" key="35">
    <source>
        <dbReference type="PDB" id="8DMJ"/>
    </source>
</evidence>
<evidence type="ECO:0007829" key="36">
    <source>
        <dbReference type="PDB" id="8DNG"/>
    </source>
</evidence>
<evidence type="ECO:0007829" key="37">
    <source>
        <dbReference type="PDB" id="8XN9"/>
    </source>
</evidence>
<gene>
    <name type="primary">F</name>
</gene>
<reference key="1">
    <citation type="journal article" date="2000" name="Virology">
        <title>Molecular characterization of Nipah virus, a newly emergent paramyxovirus.</title>
        <authorList>
            <person name="Harcourt B.H."/>
            <person name="Tamin A."/>
            <person name="Rollin P.E."/>
            <person name="Ksiazek T.G."/>
            <person name="Anderson L.J."/>
            <person name="Bellini W.J."/>
            <person name="Rota P.A."/>
        </authorList>
    </citation>
    <scope>NUCLEOTIDE SEQUENCE [MRNA]</scope>
</reference>
<reference key="2">
    <citation type="journal article" date="2000" name="Science">
        <title>Nipah virus: a recently emergent deadly paramyxovirus.</title>
        <authorList>
            <person name="Chua K.B."/>
            <person name="Bellini W.J."/>
            <person name="Rota P.A."/>
            <person name="Harcourt B.H."/>
            <person name="Tamin A."/>
            <person name="Lam S.K."/>
            <person name="Ksiazek T.G."/>
            <person name="Rollin P.E."/>
            <person name="Zaki S.R."/>
            <person name="Shieh W."/>
            <person name="Goldsmith C.S."/>
            <person name="Gubler D.J."/>
            <person name="Roehrig J.T."/>
            <person name="Eaton B."/>
            <person name="Gould A.R."/>
            <person name="Olson J."/>
            <person name="Field H."/>
            <person name="Daniels P."/>
            <person name="Ling A.E."/>
            <person name="Peters C.J."/>
            <person name="Anderson L.J."/>
            <person name="Mahy B.W."/>
        </authorList>
    </citation>
    <scope>NUCLEOTIDE SEQUENCE [GENOMIC RNA]</scope>
</reference>
<reference key="3">
    <citation type="journal article" date="2001" name="J. Gen. Virol.">
        <title>Complete nucleotide sequences of Nipah virus isolates from Malaysia.</title>
        <authorList>
            <person name="Chan Y.P."/>
            <person name="Chua K.B."/>
            <person name="Koh C.L."/>
            <person name="Lim M.E."/>
            <person name="Lam S.K."/>
        </authorList>
    </citation>
    <scope>NUCLEOTIDE SEQUENCE [GENOMIC RNA]</scope>
    <source>
        <strain>Isolate UMMC1</strain>
        <strain>Isolate UMMC2</strain>
    </source>
</reference>
<reference key="4">
    <citation type="journal article" date="2002" name="Microbes Infect.">
        <title>Isolation of Nipah virus from Malaysian island flying-foxes.</title>
        <authorList>
            <person name="Chua K.B."/>
            <person name="Koh C.L."/>
            <person name="Hooi P.S."/>
            <person name="Wee K.F."/>
            <person name="Khong J.H."/>
            <person name="Chua B.H."/>
            <person name="Chan Y.P."/>
            <person name="Lim M.E."/>
            <person name="Lam S.K."/>
        </authorList>
    </citation>
    <scope>NUCLEOTIDE SEQUENCE [GENOMIC RNA]</scope>
    <source>
        <strain>Isolate Malaysian flying-fox</strain>
    </source>
</reference>
<reference key="5">
    <citation type="journal article" date="2004" name="Emerg. Infect. Dis.">
        <title>Isolation and molecular identification of Nipah virus from pigs.</title>
        <authorList>
            <person name="Abubakar S."/>
            <person name="Chang L.Y."/>
            <person name="Mohdali A.R."/>
            <person name="Sharifah S.H."/>
            <person name="Yusoff K."/>
            <person name="Zamrod Z."/>
        </authorList>
    </citation>
    <scope>NUCLEOTIDE SEQUENCE [GENOMIC RNA]</scope>
    <source>
        <strain>Isolate NV/MY/99/UM-0128</strain>
        <strain>Isolate NV/MY/99/VRI-1413</strain>
        <strain>Isolate NV/MY/99/VRI-2794</strain>
    </source>
</reference>
<reference key="6">
    <citation type="journal article" date="2014" name="J. Virol.">
        <title>Nipah virion entry kinetics, composition, and conformational changes determined by enzymatic virus-like particles and new flow virometry tools.</title>
        <authorList>
            <person name="Landowski M."/>
            <person name="Dabundo J."/>
            <person name="Liu Q."/>
            <person name="Nicola A.V."/>
            <person name="Aguilar H.C."/>
        </authorList>
    </citation>
    <scope>FUNCTION</scope>
</reference>
<reference key="7">
    <citation type="journal article" date="2015" name="Eur. J. Cell Biol.">
        <title>Nipah virus fusion protein: Importance of the cytoplasmic tail for endosomal trafficking and bioactivity.</title>
        <authorList>
            <person name="Weis M."/>
            <person name="Maisner A."/>
        </authorList>
    </citation>
    <scope>FUNCTION</scope>
    <scope>SUBCELLULAR LOCATION</scope>
</reference>
<reference key="8">
    <citation type="journal article" date="2016" name="J. Virol.">
        <title>Multiple Strategies Reveal a Bidentate Interaction between the Nipah Virus Attachment and Fusion Glycoproteins.</title>
        <authorList>
            <person name="Stone J.A."/>
            <person name="Vemulapati B.M."/>
            <person name="Bradel-Tretheway B."/>
            <person name="Aguilar H.C."/>
        </authorList>
    </citation>
    <scope>INTERACTION WITH THE GLYCOPROTEIN G</scope>
</reference>
<reference key="9">
    <citation type="journal article" date="2017" name="J. Virol.">
        <title>Cytoplasmic Motifs in the Nipah Virus Fusion Protein Modulate Virus Particle Assembly and Egress.</title>
        <authorList>
            <person name="Johnston G.P."/>
            <person name="Contreras E.M."/>
            <person name="Dabundo J."/>
            <person name="Henderson B.A."/>
            <person name="Matz K.M."/>
            <person name="Ortega V."/>
            <person name="Ramirez A."/>
            <person name="Park A."/>
            <person name="Aguilar H.C."/>
        </authorList>
    </citation>
    <scope>FUNCTION</scope>
    <scope>MUTAGENESIS OF TYR-525 AND LEU-528</scope>
</reference>
<reference key="10">
    <citation type="submission" date="2004-08" db="PDB data bank">
        <title>Crystal structure of Nipah Virus fusion core.</title>
        <authorList>
            <person name="Xu Y."/>
            <person name="Liu Y."/>
            <person name="Lou Z."/>
            <person name="Su N."/>
            <person name="Bai Z."/>
            <person name="Gao G.F."/>
            <person name="Rao Z."/>
        </authorList>
    </citation>
    <scope>X-RAY CRYSTALLOGRAPHY (2.20 ANGSTROMS) OF 137-178 AND 187-205</scope>
</reference>
<reference key="11">
    <citation type="submission" date="2010-05" db="PDB data bank">
        <title>Molecular Basis of the Inhibition of Henipa Viruses.</title>
        <authorList>
            <person name="Liu J."/>
            <person name="Lu M."/>
        </authorList>
    </citation>
    <scope>X-RAY CRYSTALLOGRAPHY (1.80 ANGSTROMS) OF 137-178 AND 188-205</scope>
</reference>
<reference key="12">
    <citation type="journal article" date="2015" name="PLoS Pathog.">
        <title>Crystal structure of the pre-fusion nipah virus fusion glycoprotein reveals a novel hexamer-of-trimers assembly.</title>
        <authorList>
            <person name="Xu K."/>
            <person name="Chan Y.P."/>
            <person name="Bradel-Tretheway B."/>
            <person name="Akyol-Ataman Z."/>
            <person name="Zhu Y."/>
            <person name="Dutta S."/>
            <person name="Yan L."/>
            <person name="Feng Y."/>
            <person name="Wang L.F."/>
            <person name="Skiniotis G."/>
            <person name="Lee B."/>
            <person name="Zhou Z.H."/>
            <person name="Broder C.C."/>
            <person name="Aguilar H.C."/>
            <person name="Nikolov D.B."/>
        </authorList>
    </citation>
    <scope>X-RAY CRYSTALLOGRAPHY (3.37 ANGSTROMS) OF 1-488</scope>
    <scope>GLYCOSYLATION AT ASN-99; ASN-414 AND ASN-464</scope>
    <scope>SUBUNIT</scope>
</reference>
<reference evidence="16" key="13">
    <citation type="journal article" date="2019" name="Nat. Struct. Mol. Biol.">
        <title>An antibody against the F glycoprotein inhibits Nipah and Hendra virus infections.</title>
        <authorList>
            <person name="Dang H.V."/>
            <person name="Chan Y.P."/>
            <person name="Park Y.J."/>
            <person name="Snijder J."/>
            <person name="Da Silva S.C."/>
            <person name="Vu B."/>
            <person name="Yan L."/>
            <person name="Feng Y.R."/>
            <person name="Rockx B."/>
            <person name="Geisbert T.W."/>
            <person name="Mire C.E."/>
            <person name="Broder C.C."/>
            <person name="Veesler D."/>
        </authorList>
    </citation>
    <scope>STRUCTURE BY ELECTRON MICROSCOPY (3.50 ANGSTROMS) OF 1-495 IN COMPLEX WITH ANTIBODY 5B3</scope>
    <scope>DISULFIDE BONDS</scope>
    <scope>SUBUNIT</scope>
</reference>
<reference evidence="15" key="14">
    <citation type="journal article" date="2019" name="Proc. Natl. Acad. Sci. U.S.A.">
        <title>A structural basis for antibody-mediated neutralization of Nipah virus reveals a site of vulnerability at the fusion glycoprotein apex.</title>
        <authorList>
            <person name="Avanzato V.A."/>
            <person name="Oguntuyo K.Y."/>
            <person name="Escalera-Zamudio M."/>
            <person name="Gutierrez B."/>
            <person name="Golden M."/>
            <person name="Kosakovsky Pond S.L."/>
            <person name="Pryce R."/>
            <person name="Walter T.S."/>
            <person name="Seow J."/>
            <person name="Doores K.J."/>
            <person name="Pybus O.G."/>
            <person name="Munster V.J."/>
            <person name="Lee B."/>
            <person name="Bowden T.A."/>
        </authorList>
    </citation>
    <scope>X-RAY CRYSTALLOGRAPHY (3.20 ANGSTROMS) OF 26-482 IN COMPLEX WITH ANTIBODY FAB66</scope>
    <scope>DISULFIDE BONDS</scope>
</reference>
<reference evidence="17" key="15">
    <citation type="journal article" date="2021" name="Nat. Struct. Mol. Biol.">
        <title>Broadly neutralizing antibody cocktails targeting Nipah virus and Hendra virus fusion glycoproteins.</title>
        <authorList>
            <person name="Dang H.V."/>
            <person name="Cross R.W."/>
            <person name="Borisevich V."/>
            <person name="Bornholdt Z.A."/>
            <person name="West B.R."/>
            <person name="Chan Y.P."/>
            <person name="Mire C.E."/>
            <person name="Da Silva S.C."/>
            <person name="Dimitrov A.S."/>
            <person name="Yan L."/>
            <person name="Amaya M."/>
            <person name="Navaratnarajah C.K."/>
            <person name="Zeitlin L."/>
            <person name="Geisbert T.W."/>
            <person name="Broder C.C."/>
            <person name="Veesler D."/>
        </authorList>
    </citation>
    <scope>STRUCTURE BY ELECTRON MICROSCOPY (2.90 ANGSTROMS) OF 1-487 IN COMPLEX WITH ANTIBODIES 12B2 AND 1F5</scope>
    <scope>DISULFIDE BONDS</scope>
</reference>
<reference evidence="18 19 20 21 22 23" key="16">
    <citation type="journal article" date="2023" name="Nat. Commun.">
        <title>Structural basis for antibody recognition of vulnerable epitopes on Nipah virus F protein.</title>
        <authorList>
            <person name="Byrne P.O."/>
            <person name="Fisher B.E."/>
            <person name="Ambrozak D.R."/>
            <person name="Blade E.G."/>
            <person name="Tsybovsky Y."/>
            <person name="Graham B.S."/>
            <person name="McLellan J.S."/>
            <person name="Loomis R.J."/>
        </authorList>
    </citation>
    <scope>STRUCTURE BY ELECTRON MICROSCOPY (2.40 ANGSTROMS) OF 1-474 IN COMPLEX WITH DIFFERENT NEUTRALIZING ANTIBODIES</scope>
    <scope>DISULFIDE BONDS</scope>
</reference>
<reference evidence="27" key="17">
    <citation type="journal article" date="2024" name="J. Virol.">
        <title>A monoclonal antibody targeting the Nipah virus fusion glycoprotein apex imparts protection from disease.</title>
        <authorList>
            <person name="Avanzato V.A."/>
            <person name="Bushmaker T."/>
            <person name="Oguntuyo K.Y."/>
            <person name="Yinda C.K."/>
            <person name="Duyvesteyn H.M.E."/>
            <person name="Stass R."/>
            <person name="Meade-White K."/>
            <person name="Rosenke R."/>
            <person name="Thomas T."/>
            <person name="van Doremalen N."/>
            <person name="Saturday G."/>
            <person name="Doores K.J."/>
            <person name="Lee B."/>
            <person name="Bowden T.A."/>
            <person name="Munster V.J."/>
        </authorList>
    </citation>
    <scope>STRUCTURE BY ELECTRON MICROSCOPY (3.50 ANGSTROMS) OF 26-482</scope>
    <scope>DISULFIDE BONDS</scope>
</reference>
<reference evidence="25 26" key="18">
    <citation type="journal article" date="2024" name="J. Virol.">
        <title>Prefusion stabilization of the Hendra and Langya virus F proteins.</title>
        <authorList>
            <person name="Byrne P.O."/>
            <person name="Blade E.G."/>
            <person name="Fisher B.E."/>
            <person name="Ambrozak D.R."/>
            <person name="Ramamohan A.R."/>
            <person name="Graham B.S."/>
            <person name="Loomis R.J."/>
            <person name="McLellan J.S."/>
        </authorList>
    </citation>
    <scope>STRUCTURE BY ELECTRON MICROSCOPY (3.00 ANGSTROMS) OF 27-468</scope>
    <scope>DISULFIDE BONDS</scope>
    <scope>SUBUNIT</scope>
</reference>
<keyword id="KW-0002">3D-structure</keyword>
<keyword id="KW-0175">Coiled coil</keyword>
<keyword id="KW-1015">Disulfide bond</keyword>
<keyword id="KW-1169">Fusion of virus membrane with host cell membrane</keyword>
<keyword id="KW-1168">Fusion of virus membrane with host membrane</keyword>
<keyword id="KW-0325">Glycoprotein</keyword>
<keyword id="KW-1032">Host cell membrane</keyword>
<keyword id="KW-1043">Host membrane</keyword>
<keyword id="KW-0472">Membrane</keyword>
<keyword id="KW-0732">Signal</keyword>
<keyword id="KW-0812">Transmembrane</keyword>
<keyword id="KW-1133">Transmembrane helix</keyword>
<keyword id="KW-0261">Viral envelope protein</keyword>
<keyword id="KW-1162">Viral penetration into host cytoplasm</keyword>
<keyword id="KW-0946">Virion</keyword>
<keyword id="KW-1160">Virus entry into host cell</keyword>
<protein>
    <recommendedName>
        <fullName>Fusion glycoprotein F0</fullName>
        <shortName>Protein F</shortName>
    </recommendedName>
    <component>
        <recommendedName>
            <fullName>Fusion glycoprotein F2</fullName>
        </recommendedName>
    </component>
    <component>
        <recommendedName>
            <fullName>Fusion glycoprotein F1</fullName>
        </recommendedName>
    </component>
</protein>
<accession>Q9IH63</accession>
<accession>Q5K4D9</accession>
<accession>Q8QU00</accession>
<proteinExistence type="evidence at protein level"/>
<organismHost>
    <name type="scientific">Cynopterus brachyotis</name>
    <name type="common">Lesser short-nosed fruit bat</name>
    <name type="synonym">Pachysoma brachyotis</name>
    <dbReference type="NCBI Taxonomy" id="58060"/>
</organismHost>
<organismHost>
    <name type="scientific">Eonycteris spelaea</name>
    <name type="common">Lesser dawn bat</name>
    <name type="synonym">Macroglossus spelaeus</name>
    <dbReference type="NCBI Taxonomy" id="58065"/>
</organismHost>
<organismHost>
    <name type="scientific">Homo sapiens</name>
    <name type="common">Human</name>
    <dbReference type="NCBI Taxonomy" id="9606"/>
</organismHost>
<organismHost>
    <name type="scientific">Pteropus hypomelanus</name>
    <name type="common">Island flying fox</name>
    <name type="synonym">Variable flying fox</name>
    <dbReference type="NCBI Taxonomy" id="9405"/>
</organismHost>
<organismHost>
    <name type="scientific">Pteropus vampyrus</name>
    <name type="common">Large flying fox</name>
    <dbReference type="NCBI Taxonomy" id="132908"/>
</organismHost>
<organismHost>
    <name type="scientific">Scotophilus kuhlii</name>
    <name type="common">Lesser asiatic yellow bat</name>
    <dbReference type="NCBI Taxonomy" id="153297"/>
</organismHost>
<organismHost>
    <name type="scientific">Sus scrofa</name>
    <name type="common">Pig</name>
    <dbReference type="NCBI Taxonomy" id="9823"/>
</organismHost>
<name>FUS_NIPAV</name>
<dbReference type="EMBL" id="AF238466">
    <property type="protein sequence ID" value="AAF73956.1"/>
    <property type="molecule type" value="mRNA"/>
</dbReference>
<dbReference type="EMBL" id="AF212302">
    <property type="protein sequence ID" value="AAK29087.1"/>
    <property type="molecule type" value="Genomic_RNA"/>
</dbReference>
<dbReference type="EMBL" id="AY029767">
    <property type="protein sequence ID" value="AAK50544.1"/>
    <property type="molecule type" value="Genomic_RNA"/>
</dbReference>
<dbReference type="EMBL" id="AY029768">
    <property type="protein sequence ID" value="AAK50553.1"/>
    <property type="molecule type" value="Genomic_RNA"/>
</dbReference>
<dbReference type="EMBL" id="AF376747">
    <property type="protein sequence ID" value="AAM13405.1"/>
    <property type="molecule type" value="Genomic_RNA"/>
</dbReference>
<dbReference type="EMBL" id="AJ564621">
    <property type="protein sequence ID" value="CAD92350.1"/>
    <property type="molecule type" value="Genomic_RNA"/>
</dbReference>
<dbReference type="EMBL" id="AJ564622">
    <property type="protein sequence ID" value="CAD92356.1"/>
    <property type="molecule type" value="Genomic_RNA"/>
</dbReference>
<dbReference type="EMBL" id="AJ564623">
    <property type="protein sequence ID" value="CAD92362.1"/>
    <property type="molecule type" value="Genomic_RNA"/>
</dbReference>
<dbReference type="EMBL" id="AJ627196">
    <property type="protein sequence ID" value="CAF25496.1"/>
    <property type="molecule type" value="Genomic_RNA"/>
</dbReference>
<dbReference type="RefSeq" id="NP_112026.1">
    <property type="nucleotide sequence ID" value="NC_002728.1"/>
</dbReference>
<dbReference type="PDB" id="1WP7">
    <property type="method" value="X-ray"/>
    <property type="resolution" value="2.20 A"/>
    <property type="chains" value="A/B/C=137-178, A/B/C=453-485"/>
</dbReference>
<dbReference type="PDB" id="3N27">
    <property type="method" value="X-ray"/>
    <property type="resolution" value="1.80 A"/>
    <property type="chains" value="A/B/C=137-178"/>
</dbReference>
<dbReference type="PDB" id="5EVM">
    <property type="method" value="X-ray"/>
    <property type="resolution" value="3.37 A"/>
    <property type="chains" value="A/B/C/D/E/F=1-488"/>
</dbReference>
<dbReference type="PDB" id="6T3F">
    <property type="method" value="X-ray"/>
    <property type="resolution" value="3.20 A"/>
    <property type="chains" value="F=26-482"/>
</dbReference>
<dbReference type="PDB" id="6TYS">
    <property type="method" value="EM"/>
    <property type="resolution" value="3.50 A"/>
    <property type="chains" value="A/B/E=1-495"/>
</dbReference>
<dbReference type="PDB" id="7KI4">
    <property type="method" value="EM"/>
    <property type="resolution" value="2.90 A"/>
    <property type="chains" value="A/B/E=1-487"/>
</dbReference>
<dbReference type="PDB" id="7UOP">
    <property type="method" value="EM"/>
    <property type="resolution" value="2.80 A"/>
    <property type="chains" value="A/D/G=1-475"/>
</dbReference>
<dbReference type="PDB" id="7UP9">
    <property type="method" value="EM"/>
    <property type="resolution" value="2.90 A"/>
    <property type="chains" value="A/D/G=1-475"/>
</dbReference>
<dbReference type="PDB" id="7UPA">
    <property type="method" value="EM"/>
    <property type="resolution" value="2.50 A"/>
    <property type="chains" value="A/D/G=1-480"/>
</dbReference>
<dbReference type="PDB" id="7UPB">
    <property type="method" value="EM"/>
    <property type="resolution" value="3.00 A"/>
    <property type="chains" value="A/D/G=1-475"/>
</dbReference>
<dbReference type="PDB" id="7UPD">
    <property type="method" value="EM"/>
    <property type="resolution" value="2.40 A"/>
    <property type="chains" value="A/D/G=1-474"/>
</dbReference>
<dbReference type="PDB" id="7UPK">
    <property type="method" value="EM"/>
    <property type="resolution" value="2.80 A"/>
    <property type="chains" value="A/B/D=1-480"/>
</dbReference>
<dbReference type="PDB" id="8DMJ">
    <property type="method" value="EM"/>
    <property type="resolution" value="3.20 A"/>
    <property type="chains" value="A/B/C=26-99, A/B/C=117-488"/>
</dbReference>
<dbReference type="PDB" id="8DNG">
    <property type="method" value="EM"/>
    <property type="resolution" value="3.00 A"/>
    <property type="chains" value="A/D/G=27-468"/>
</dbReference>
<dbReference type="PDB" id="8DO4">
    <property type="method" value="EM"/>
    <property type="resolution" value="3.20 A"/>
    <property type="chains" value="A/B/C/D/E/G=26-488"/>
</dbReference>
<dbReference type="PDB" id="8RVN">
    <property type="method" value="EM"/>
    <property type="resolution" value="3.50 A"/>
    <property type="chains" value="B/C/F=26-482"/>
</dbReference>
<dbReference type="PDB" id="8XN9">
    <property type="method" value="EM"/>
    <property type="resolution" value="1.99 A"/>
    <property type="chains" value="A/B/C=26-482"/>
</dbReference>
<dbReference type="PDB" id="8XNH">
    <property type="method" value="EM"/>
    <property type="resolution" value="2.30 A"/>
    <property type="chains" value="A/B/C=27-482"/>
</dbReference>
<dbReference type="PDBsum" id="1WP7"/>
<dbReference type="PDBsum" id="3N27"/>
<dbReference type="PDBsum" id="5EVM"/>
<dbReference type="PDBsum" id="6T3F"/>
<dbReference type="PDBsum" id="6TYS"/>
<dbReference type="PDBsum" id="7KI4"/>
<dbReference type="PDBsum" id="7UOP"/>
<dbReference type="PDBsum" id="7UP9"/>
<dbReference type="PDBsum" id="7UPA"/>
<dbReference type="PDBsum" id="7UPB"/>
<dbReference type="PDBsum" id="7UPD"/>
<dbReference type="PDBsum" id="7UPK"/>
<dbReference type="PDBsum" id="8DMJ"/>
<dbReference type="PDBsum" id="8DNG"/>
<dbReference type="PDBsum" id="8DO4"/>
<dbReference type="PDBsum" id="8RVN"/>
<dbReference type="PDBsum" id="8XN9"/>
<dbReference type="PDBsum" id="8XNH"/>
<dbReference type="EMDB" id="EMD-19525"/>
<dbReference type="EMDB" id="EMD-20584"/>
<dbReference type="EMDB" id="EMD-22884"/>
<dbReference type="EMDB" id="EMD-26652"/>
<dbReference type="EMDB" id="EMD-26658"/>
<dbReference type="EMDB" id="EMD-26659"/>
<dbReference type="EMDB" id="EMD-26660"/>
<dbReference type="EMDB" id="EMD-26662"/>
<dbReference type="EMDB" id="EMD-26668"/>
<dbReference type="EMDB" id="EMD-27541"/>
<dbReference type="EMDB" id="EMD-27566"/>
<dbReference type="EMDB" id="EMD-27590"/>
<dbReference type="EMDB" id="EMD-38499"/>
<dbReference type="EMDB" id="EMD-38504"/>
<dbReference type="SMR" id="Q9IH63"/>
<dbReference type="IntAct" id="Q9IH63">
    <property type="interactions" value="18"/>
</dbReference>
<dbReference type="MINT" id="Q9IH63"/>
<dbReference type="TCDB" id="1.G.2.1.9">
    <property type="family name" value="the viral pore-forming membrane fusion protein-2 (vmfp2) family"/>
</dbReference>
<dbReference type="GlyCosmos" id="Q9IH63">
    <property type="glycosylation" value="5 sites, No reported glycans"/>
</dbReference>
<dbReference type="ABCD" id="Q9IH63">
    <property type="antibodies" value="2 sequenced antibodies"/>
</dbReference>
<dbReference type="GeneID" id="920954"/>
<dbReference type="KEGG" id="vg:920954"/>
<dbReference type="OrthoDB" id="2687at10239"/>
<dbReference type="EvolutionaryTrace" id="Q9IH63"/>
<dbReference type="Proteomes" id="UP000002330">
    <property type="component" value="Segment"/>
</dbReference>
<dbReference type="Proteomes" id="UP000007527">
    <property type="component" value="Segment"/>
</dbReference>
<dbReference type="Proteomes" id="UP000008676">
    <property type="component" value="Segment"/>
</dbReference>
<dbReference type="Proteomes" id="UP000100567">
    <property type="component" value="Segment"/>
</dbReference>
<dbReference type="Proteomes" id="UP000110983">
    <property type="component" value="Segment"/>
</dbReference>
<dbReference type="Proteomes" id="UP000130871">
    <property type="component" value="Segment"/>
</dbReference>
<dbReference type="Proteomes" id="UP000170143">
    <property type="component" value="Segment"/>
</dbReference>
<dbReference type="GO" id="GO:0020002">
    <property type="term" value="C:host cell plasma membrane"/>
    <property type="evidence" value="ECO:0007669"/>
    <property type="project" value="UniProtKB-SubCell"/>
</dbReference>
<dbReference type="GO" id="GO:0016020">
    <property type="term" value="C:membrane"/>
    <property type="evidence" value="ECO:0007669"/>
    <property type="project" value="UniProtKB-KW"/>
</dbReference>
<dbReference type="GO" id="GO:0019031">
    <property type="term" value="C:viral envelope"/>
    <property type="evidence" value="ECO:0007669"/>
    <property type="project" value="UniProtKB-KW"/>
</dbReference>
<dbReference type="GO" id="GO:0055036">
    <property type="term" value="C:virion membrane"/>
    <property type="evidence" value="ECO:0007669"/>
    <property type="project" value="UniProtKB-SubCell"/>
</dbReference>
<dbReference type="GO" id="GO:0019064">
    <property type="term" value="P:fusion of virus membrane with host plasma membrane"/>
    <property type="evidence" value="ECO:0007669"/>
    <property type="project" value="UniProtKB-KW"/>
</dbReference>
<dbReference type="GO" id="GO:0039663">
    <property type="term" value="P:membrane fusion involved in viral entry into host cell"/>
    <property type="evidence" value="ECO:0000314"/>
    <property type="project" value="CAFA"/>
</dbReference>
<dbReference type="GO" id="GO:0046718">
    <property type="term" value="P:symbiont entry into host cell"/>
    <property type="evidence" value="ECO:0007669"/>
    <property type="project" value="UniProtKB-KW"/>
</dbReference>
<dbReference type="Gene3D" id="1.10.287.2480">
    <property type="match status" value="1"/>
</dbReference>
<dbReference type="Gene3D" id="6.10.10.110">
    <property type="match status" value="1"/>
</dbReference>
<dbReference type="Gene3D" id="2.60.40.1690">
    <property type="entry name" value="Head and neck region of the ectodomain of NDV fusion glycoprotein"/>
    <property type="match status" value="1"/>
</dbReference>
<dbReference type="Gene3D" id="2.40.490.10">
    <property type="entry name" value="Newcastle disease virus like domain"/>
    <property type="match status" value="1"/>
</dbReference>
<dbReference type="Gene3D" id="1.10.287.770">
    <property type="entry name" value="YojJ-like"/>
    <property type="match status" value="1"/>
</dbReference>
<dbReference type="InterPro" id="IPR000776">
    <property type="entry name" value="Fusion_F0_Paramyxovir"/>
</dbReference>
<dbReference type="Pfam" id="PF00523">
    <property type="entry name" value="Fusion_gly"/>
    <property type="match status" value="1"/>
</dbReference>
<dbReference type="SUPFAM" id="SSF69922">
    <property type="entry name" value="Head and neck region of the ectodomain of NDV fusion glycoprotein"/>
    <property type="match status" value="1"/>
</dbReference>
<dbReference type="SUPFAM" id="SSF58069">
    <property type="entry name" value="Virus ectodomain"/>
    <property type="match status" value="1"/>
</dbReference>
<organism>
    <name type="scientific">Nipah virus</name>
    <dbReference type="NCBI Taxonomy" id="3052225"/>
    <lineage>
        <taxon>Viruses</taxon>
        <taxon>Riboviria</taxon>
        <taxon>Orthornavirae</taxon>
        <taxon>Negarnaviricota</taxon>
        <taxon>Haploviricotina</taxon>
        <taxon>Monjiviricetes</taxon>
        <taxon>Mononegavirales</taxon>
        <taxon>Paramyxoviridae</taxon>
        <taxon>Orthoparamyxovirinae</taxon>
        <taxon>Henipavirus</taxon>
    </lineage>
</organism>
<comment type="function">
    <text evidence="3 4 6">Class I viral fusion protein. Under the current model, the protein has at least 3 conformational states: pre-fusion native state, pre-hairpin intermediate state, and post-fusion hairpin state. During viral and plasma cell membrane fusion, the heptad repeat (HR) regions assume a trimer-of-hairpins structure, positioning the fusion peptide in close proximity to the C-terminal region of the ectodomain. The formation of this structure appears to drive apposition and subsequent fusion of viral and plasma cell membranes. Directs fusion of viral and cellular membranes leading to delivery of the nucleocapsid into the cytoplasm. This fusion is pH independent and occurs directly at the outer cell membrane. The trimer of F1-F2 (F protein) probably interacts with G at the virion surface. Upon G binding to its cellular receptor, the hydrophobic fusion peptide is unmasked and interacts with the cellular membrane, inducing the fusion between cell and virion membranes. Later in infection, F proteins expressed at the plasma membrane of infected cells could mediate fusion with adjacent cells to form syncytia, a cytopathic effect that could lead to tissue necrosis.</text>
</comment>
<comment type="subunit">
    <text evidence="5 7 11">Homotrimer; disulfide-linked F1-F2 (PubMed:26646856, PubMed:31570878). Interacts with the Glycoprotein G; this interaction involves both head and stalk regions of glygoprotein G (PubMed:26646856). In pre-fusion state, found as a dimer of trimer (PubMed:38214525).</text>
</comment>
<comment type="subcellular location">
    <subcellularLocation>
        <location evidence="4">Virion membrane</location>
        <topology>Single-pass type I membrane protein</topology>
    </subcellularLocation>
    <subcellularLocation>
        <location evidence="4">Host cell membrane</location>
        <topology>Single-pass membrane protein</topology>
    </subcellularLocation>
</comment>
<comment type="PTM">
    <text evidence="1">The inactive precursor F0 is glycosylated and proteolytically cleaved into F1 and F2 to be functionally active. The cleavage is mediated by cellular proteases during the transport and maturation of the polypeptide (By similarity).</text>
</comment>
<comment type="similarity">
    <text evidence="13">Belongs to the paramyxoviruses fusion glycoprotein family.</text>
</comment>
<sequence>MVVILDKRCYCNLLILILMISECSVGILHYEKLSKIGLVKGVTRKYKIKSNPLTKDIVIKMIPNVSNMSQCTGSVMENYKTRLNGILTPIKGALEIYKNNTHDLVGDVRLAGVIMAGVAIGIATAAQITAGVALYEAMKNADNINKLKSSIESTNEAVVKLQETAEKTVYVLTALQDYINTNLVPTIDKISCKQTELSLDLALSKYLSDLLFVFGPNLQDPVSNSMTIQAISQAFGGNYETLLRTLGYATEDFDDLLESDSITGQIIYVDLSSYYIIVRVYFPILTEIQQAYIQELLPVSFNNDNSEWISIVPNFILVRNTLISNIEIGFCLITKRSVICNQDYATPMTNNMRECLTGSTEKCPRELVVSSHVPRFALSNGVLFANCISVTCQCQTTGRAISQSGEQTLLMIDNTTCPTAVLGNVIISLGKYLGSVNYNSEGIAIGPPVFTDKVDISSQISSMNQSLQQSKDYIKEAQRLLDTVNPSLISMLSMIILYVLSIASLCIGLITFISFIIVEKKRNTYSRLEDRRVRPTSSGDLYYIGT</sequence>